<accession>Q9RHN2</accession>
<evidence type="ECO:0000255" key="1">
    <source>
        <dbReference type="HAMAP-Rule" id="MF_01657"/>
    </source>
</evidence>
<sequence length="307" mass="32366">MSQKIKCALIGPGNIGTDLLAKLQRSPVLEPVWMVGIDPDSDGLKRAREMGIKTTAEGVDGLLPHMHVDGVQIVFDATSAYVHAENSRKVNERGALMIDLTPAAIGPFCVPPVNLIQHLGSGAMNVNMVTCGGQATIPMVAAVSRVQAVAYGEIVATVSSKSVGPGTRKNIDEFTRTTAGAVEKVGGAKKGKAIIVINPAEPPLMMRDTVHCLTEDEPDQAAITASIHQMLAEVQKYVPGYRLVNGPVFDGKRVSVFLEVEGLGDYLPKYAGNLDIMTAAAARTAEMFAEQMLAGKLTLAPVAPIAA</sequence>
<dbReference type="EC" id="1.2.1.10" evidence="1"/>
<dbReference type="EMBL" id="AB029044">
    <property type="protein sequence ID" value="BAA88503.1"/>
    <property type="molecule type" value="Genomic_DNA"/>
</dbReference>
<dbReference type="SMR" id="Q9RHN2"/>
<dbReference type="GO" id="GO:0008774">
    <property type="term" value="F:acetaldehyde dehydrogenase (acetylating) activity"/>
    <property type="evidence" value="ECO:0007669"/>
    <property type="project" value="UniProtKB-UniRule"/>
</dbReference>
<dbReference type="GO" id="GO:0051287">
    <property type="term" value="F:NAD binding"/>
    <property type="evidence" value="ECO:0007669"/>
    <property type="project" value="UniProtKB-UniRule"/>
</dbReference>
<dbReference type="GO" id="GO:0009056">
    <property type="term" value="P:catabolic process"/>
    <property type="evidence" value="ECO:0007669"/>
    <property type="project" value="UniProtKB-KW"/>
</dbReference>
<dbReference type="CDD" id="cd23933">
    <property type="entry name" value="ALDH_C"/>
    <property type="match status" value="1"/>
</dbReference>
<dbReference type="Gene3D" id="3.30.360.10">
    <property type="entry name" value="Dihydrodipicolinate Reductase, domain 2"/>
    <property type="match status" value="1"/>
</dbReference>
<dbReference type="Gene3D" id="3.40.50.720">
    <property type="entry name" value="NAD(P)-binding Rossmann-like Domain"/>
    <property type="match status" value="1"/>
</dbReference>
<dbReference type="HAMAP" id="MF_01657">
    <property type="entry name" value="Ac_ald_DH_ac"/>
    <property type="match status" value="1"/>
</dbReference>
<dbReference type="InterPro" id="IPR003361">
    <property type="entry name" value="Acetaldehyde_dehydrogenase"/>
</dbReference>
<dbReference type="InterPro" id="IPR015426">
    <property type="entry name" value="Acetylaldehyde_DH_C"/>
</dbReference>
<dbReference type="InterPro" id="IPR036291">
    <property type="entry name" value="NAD(P)-bd_dom_sf"/>
</dbReference>
<dbReference type="InterPro" id="IPR000534">
    <property type="entry name" value="Semialdehyde_DH_NAD-bd"/>
</dbReference>
<dbReference type="NCBIfam" id="TIGR03215">
    <property type="entry name" value="ac_ald_DH_ac"/>
    <property type="match status" value="1"/>
</dbReference>
<dbReference type="NCBIfam" id="NF006157">
    <property type="entry name" value="PRK08300.1"/>
    <property type="match status" value="1"/>
</dbReference>
<dbReference type="Pfam" id="PF09290">
    <property type="entry name" value="AcetDehyd-dimer"/>
    <property type="match status" value="1"/>
</dbReference>
<dbReference type="Pfam" id="PF01118">
    <property type="entry name" value="Semialdhyde_dh"/>
    <property type="match status" value="1"/>
</dbReference>
<dbReference type="PIRSF" id="PIRSF015689">
    <property type="entry name" value="Actaldh_dh_actl"/>
    <property type="match status" value="1"/>
</dbReference>
<dbReference type="SMART" id="SM00859">
    <property type="entry name" value="Semialdhyde_dh"/>
    <property type="match status" value="1"/>
</dbReference>
<dbReference type="SUPFAM" id="SSF55347">
    <property type="entry name" value="Glyceraldehyde-3-phosphate dehydrogenase-like, C-terminal domain"/>
    <property type="match status" value="1"/>
</dbReference>
<dbReference type="SUPFAM" id="SSF51735">
    <property type="entry name" value="NAD(P)-binding Rossmann-fold domains"/>
    <property type="match status" value="1"/>
</dbReference>
<feature type="chain" id="PRO_0000387651" description="Acetaldehyde dehydrogenase 2">
    <location>
        <begin position="1"/>
        <end position="307"/>
    </location>
</feature>
<feature type="active site" description="Acyl-thioester intermediate" evidence="1">
    <location>
        <position position="131"/>
    </location>
</feature>
<feature type="binding site" evidence="1">
    <location>
        <begin position="162"/>
        <end position="170"/>
    </location>
    <ligand>
        <name>NAD(+)</name>
        <dbReference type="ChEBI" id="CHEBI:57540"/>
    </ligand>
</feature>
<feature type="binding site" evidence="1">
    <location>
        <position position="273"/>
    </location>
    <ligand>
        <name>NAD(+)</name>
        <dbReference type="ChEBI" id="CHEBI:57540"/>
    </ligand>
</feature>
<reference key="1">
    <citation type="journal article" date="2000" name="Microbiology">
        <title>Arrangement and regulation of the genes for meta-pathway enzymes required for degradation of phenol in Comamonas testosteroni TA441.</title>
        <authorList>
            <person name="Arai H."/>
            <person name="Ohishi T."/>
            <person name="Chang M.Y."/>
            <person name="Kudo T."/>
        </authorList>
    </citation>
    <scope>NUCLEOTIDE SEQUENCE [GENOMIC DNA]</scope>
    <source>
        <strain>TA441</strain>
    </source>
</reference>
<gene>
    <name type="primary">aphF</name>
</gene>
<keyword id="KW-0058">Aromatic hydrocarbons catabolism</keyword>
<keyword id="KW-0520">NAD</keyword>
<keyword id="KW-0560">Oxidoreductase</keyword>
<proteinExistence type="inferred from homology"/>
<comment type="catalytic activity">
    <reaction evidence="1">
        <text>acetaldehyde + NAD(+) + CoA = acetyl-CoA + NADH + H(+)</text>
        <dbReference type="Rhea" id="RHEA:23288"/>
        <dbReference type="ChEBI" id="CHEBI:15343"/>
        <dbReference type="ChEBI" id="CHEBI:15378"/>
        <dbReference type="ChEBI" id="CHEBI:57287"/>
        <dbReference type="ChEBI" id="CHEBI:57288"/>
        <dbReference type="ChEBI" id="CHEBI:57540"/>
        <dbReference type="ChEBI" id="CHEBI:57945"/>
        <dbReference type="EC" id="1.2.1.10"/>
    </reaction>
</comment>
<comment type="similarity">
    <text evidence="1">Belongs to the acetaldehyde dehydrogenase family.</text>
</comment>
<protein>
    <recommendedName>
        <fullName evidence="1">Acetaldehyde dehydrogenase 2</fullName>
        <ecNumber evidence="1">1.2.1.10</ecNumber>
    </recommendedName>
    <alternativeName>
        <fullName evidence="1">Acetaldehyde dehydrogenase [acetylating] 2</fullName>
    </alternativeName>
</protein>
<name>ACDH2_COMTE</name>
<organism>
    <name type="scientific">Comamonas testosteroni</name>
    <name type="common">Pseudomonas testosteroni</name>
    <dbReference type="NCBI Taxonomy" id="285"/>
    <lineage>
        <taxon>Bacteria</taxon>
        <taxon>Pseudomonadati</taxon>
        <taxon>Pseudomonadota</taxon>
        <taxon>Betaproteobacteria</taxon>
        <taxon>Burkholderiales</taxon>
        <taxon>Comamonadaceae</taxon>
        <taxon>Comamonas</taxon>
    </lineage>
</organism>